<protein>
    <recommendedName>
        <fullName evidence="1">Large ribosomal subunit protein uL29</fullName>
    </recommendedName>
    <alternativeName>
        <fullName evidence="2">50S ribosomal protein L29</fullName>
    </alternativeName>
</protein>
<keyword id="KW-0687">Ribonucleoprotein</keyword>
<keyword id="KW-0689">Ribosomal protein</keyword>
<accession>Q3MFB3</accession>
<proteinExistence type="inferred from homology"/>
<evidence type="ECO:0000255" key="1">
    <source>
        <dbReference type="HAMAP-Rule" id="MF_00374"/>
    </source>
</evidence>
<evidence type="ECO:0000305" key="2"/>
<reference key="1">
    <citation type="journal article" date="2014" name="Stand. Genomic Sci.">
        <title>Complete genome sequence of Anabaena variabilis ATCC 29413.</title>
        <authorList>
            <person name="Thiel T."/>
            <person name="Pratte B.S."/>
            <person name="Zhong J."/>
            <person name="Goodwin L."/>
            <person name="Copeland A."/>
            <person name="Lucas S."/>
            <person name="Han C."/>
            <person name="Pitluck S."/>
            <person name="Land M.L."/>
            <person name="Kyrpides N.C."/>
            <person name="Woyke T."/>
        </authorList>
    </citation>
    <scope>NUCLEOTIDE SEQUENCE [LARGE SCALE GENOMIC DNA]</scope>
    <source>
        <strain>ATCC 29413 / PCC 7937</strain>
    </source>
</reference>
<gene>
    <name evidence="1" type="primary">rpmC</name>
    <name evidence="1" type="synonym">rpl29</name>
    <name type="ordered locus">Ava_0699</name>
</gene>
<feature type="chain" id="PRO_1000007415" description="Large ribosomal subunit protein uL29">
    <location>
        <begin position="1"/>
        <end position="74"/>
    </location>
</feature>
<name>RL29_TRIV2</name>
<comment type="similarity">
    <text evidence="1">Belongs to the universal ribosomal protein uL29 family.</text>
</comment>
<organism>
    <name type="scientific">Trichormus variabilis (strain ATCC 29413 / PCC 7937)</name>
    <name type="common">Anabaena variabilis</name>
    <dbReference type="NCBI Taxonomy" id="240292"/>
    <lineage>
        <taxon>Bacteria</taxon>
        <taxon>Bacillati</taxon>
        <taxon>Cyanobacteriota</taxon>
        <taxon>Cyanophyceae</taxon>
        <taxon>Nostocales</taxon>
        <taxon>Nostocaceae</taxon>
        <taxon>Trichormus</taxon>
    </lineage>
</organism>
<dbReference type="EMBL" id="CP000117">
    <property type="protein sequence ID" value="ABA20323.1"/>
    <property type="molecule type" value="Genomic_DNA"/>
</dbReference>
<dbReference type="RefSeq" id="WP_010998345.1">
    <property type="nucleotide sequence ID" value="NC_007413.1"/>
</dbReference>
<dbReference type="SMR" id="Q3MFB3"/>
<dbReference type="STRING" id="240292.Ava_0699"/>
<dbReference type="GeneID" id="58723357"/>
<dbReference type="KEGG" id="ava:Ava_0699"/>
<dbReference type="eggNOG" id="COG0255">
    <property type="taxonomic scope" value="Bacteria"/>
</dbReference>
<dbReference type="HOGENOM" id="CLU_158491_0_0_3"/>
<dbReference type="Proteomes" id="UP000002533">
    <property type="component" value="Chromosome"/>
</dbReference>
<dbReference type="GO" id="GO:0022625">
    <property type="term" value="C:cytosolic large ribosomal subunit"/>
    <property type="evidence" value="ECO:0007669"/>
    <property type="project" value="TreeGrafter"/>
</dbReference>
<dbReference type="GO" id="GO:0003735">
    <property type="term" value="F:structural constituent of ribosome"/>
    <property type="evidence" value="ECO:0007669"/>
    <property type="project" value="InterPro"/>
</dbReference>
<dbReference type="GO" id="GO:0006412">
    <property type="term" value="P:translation"/>
    <property type="evidence" value="ECO:0007669"/>
    <property type="project" value="UniProtKB-UniRule"/>
</dbReference>
<dbReference type="CDD" id="cd00427">
    <property type="entry name" value="Ribosomal_L29_HIP"/>
    <property type="match status" value="1"/>
</dbReference>
<dbReference type="Gene3D" id="1.10.287.310">
    <property type="match status" value="1"/>
</dbReference>
<dbReference type="HAMAP" id="MF_00374">
    <property type="entry name" value="Ribosomal_uL29"/>
    <property type="match status" value="1"/>
</dbReference>
<dbReference type="InterPro" id="IPR050063">
    <property type="entry name" value="Ribosomal_protein_uL29"/>
</dbReference>
<dbReference type="InterPro" id="IPR001854">
    <property type="entry name" value="Ribosomal_uL29"/>
</dbReference>
<dbReference type="InterPro" id="IPR018254">
    <property type="entry name" value="Ribosomal_uL29_CS"/>
</dbReference>
<dbReference type="InterPro" id="IPR036049">
    <property type="entry name" value="Ribosomal_uL29_sf"/>
</dbReference>
<dbReference type="NCBIfam" id="TIGR00012">
    <property type="entry name" value="L29"/>
    <property type="match status" value="1"/>
</dbReference>
<dbReference type="PANTHER" id="PTHR10916">
    <property type="entry name" value="60S RIBOSOMAL PROTEIN L35/50S RIBOSOMAL PROTEIN L29"/>
    <property type="match status" value="1"/>
</dbReference>
<dbReference type="PANTHER" id="PTHR10916:SF0">
    <property type="entry name" value="LARGE RIBOSOMAL SUBUNIT PROTEIN UL29C"/>
    <property type="match status" value="1"/>
</dbReference>
<dbReference type="Pfam" id="PF00831">
    <property type="entry name" value="Ribosomal_L29"/>
    <property type="match status" value="1"/>
</dbReference>
<dbReference type="SUPFAM" id="SSF46561">
    <property type="entry name" value="Ribosomal protein L29 (L29p)"/>
    <property type="match status" value="1"/>
</dbReference>
<dbReference type="PROSITE" id="PS00579">
    <property type="entry name" value="RIBOSOMAL_L29"/>
    <property type="match status" value="1"/>
</dbReference>
<sequence length="74" mass="8653">MPLPKISEARELSDERLVEEITAVKKQLFQLRLQKATRQLDKPHQFRHARHRLAQLLTVEGERKRAAATQSPQE</sequence>